<sequence>MSSNPQHLSGNEIRTRFLDFYAQRGHQILASASLVPEDPTVLLTIAGMLPFKPIFLGQRTPEFKRATTSQKCIRTNDIENVGRTKRHQTFFEMLGNFSFGDYFKEQAIAWGWEISTEVFGLPKERLVVSVFEEDDEAYVIWRDQIGVTEARIKRMGADDNFWVSGPTGPCGPCSEIYYDFHPERGDENIDLEDDTRFIEFYNLVFMQYNRDASGNLTPLQNKNIDTGMGLERITQILQQVPNNYETDLIFPIIETAAKIAGIDYHSSDETTKVSLKVIGDHVRSVVHMIADEIRASNVGRGYVLRRLIRRVVRHGRLIGISGEFINQVAERAIALSESAYPNVRKRETVIKAELEREEANFLKTLDRGEKLLEEIIQQVKKQGQTIISGESAFTLYDTYGFPLELTQEIAEENNLTVDEDDFNVEMQKQVERAKAAHETIDLTVQGSLDKLAEHIHATEFIGYSQATATAKVEVLLVDGVVQEEAEAGTEVQIVLDKTPFYAESGGQIGDRGYISGDGIVVQVEDVKKESDFFVHFGRIERGTLRVGDSVTAQIDRAGRRRAQANHTATHLLQAALKTIVDGGISQAGSLVSFDRLRFDFNSPRGLTAEEIQQVEEQINTWIAEAHSAKIEVLPLAEAKARGAVAMFGEKYGDEVRVIDFPGVSMELCGGTHVSNTAEIGVFKIISEAGVASGVRRIEAVSGLAVLDYLNVRDKVVKDLSDRFKVKPEELPERITTLQNELRTTEKQLETLKGQLAIAKSDSLLQTADTLGDHKIIVAQLEGVDPESLKSAAERLLQKIGNGAVVLGSVPEADKVSLVAAFSPEVNKKGLQAGKFIGAIAKICGGGGGGRPNLAQAGGRDASKLPTALEQAQSELKSALG</sequence>
<keyword id="KW-0030">Aminoacyl-tRNA synthetase</keyword>
<keyword id="KW-0067">ATP-binding</keyword>
<keyword id="KW-0963">Cytoplasm</keyword>
<keyword id="KW-0436">Ligase</keyword>
<keyword id="KW-0479">Metal-binding</keyword>
<keyword id="KW-0547">Nucleotide-binding</keyword>
<keyword id="KW-0648">Protein biosynthesis</keyword>
<keyword id="KW-0694">RNA-binding</keyword>
<keyword id="KW-0820">tRNA-binding</keyword>
<keyword id="KW-0862">Zinc</keyword>
<feature type="chain" id="PRO_0000347487" description="Alanine--tRNA ligase">
    <location>
        <begin position="1"/>
        <end position="880"/>
    </location>
</feature>
<feature type="binding site" evidence="1">
    <location>
        <position position="566"/>
    </location>
    <ligand>
        <name>Zn(2+)</name>
        <dbReference type="ChEBI" id="CHEBI:29105"/>
    </ligand>
</feature>
<feature type="binding site" evidence="1">
    <location>
        <position position="570"/>
    </location>
    <ligand>
        <name>Zn(2+)</name>
        <dbReference type="ChEBI" id="CHEBI:29105"/>
    </ligand>
</feature>
<feature type="binding site" evidence="1">
    <location>
        <position position="668"/>
    </location>
    <ligand>
        <name>Zn(2+)</name>
        <dbReference type="ChEBI" id="CHEBI:29105"/>
    </ligand>
</feature>
<feature type="binding site" evidence="1">
    <location>
        <position position="672"/>
    </location>
    <ligand>
        <name>Zn(2+)</name>
        <dbReference type="ChEBI" id="CHEBI:29105"/>
    </ligand>
</feature>
<evidence type="ECO:0000255" key="1">
    <source>
        <dbReference type="HAMAP-Rule" id="MF_00036"/>
    </source>
</evidence>
<organism>
    <name type="scientific">Trichormus variabilis (strain ATCC 29413 / PCC 7937)</name>
    <name type="common">Anabaena variabilis</name>
    <dbReference type="NCBI Taxonomy" id="240292"/>
    <lineage>
        <taxon>Bacteria</taxon>
        <taxon>Bacillati</taxon>
        <taxon>Cyanobacteriota</taxon>
        <taxon>Cyanophyceae</taxon>
        <taxon>Nostocales</taxon>
        <taxon>Nostocaceae</taxon>
        <taxon>Trichormus</taxon>
    </lineage>
</organism>
<proteinExistence type="inferred from homology"/>
<comment type="function">
    <text evidence="1">Catalyzes the attachment of alanine to tRNA(Ala) in a two-step reaction: alanine is first activated by ATP to form Ala-AMP and then transferred to the acceptor end of tRNA(Ala). Also edits incorrectly charged Ser-tRNA(Ala) and Gly-tRNA(Ala) via its editing domain.</text>
</comment>
<comment type="catalytic activity">
    <reaction evidence="1">
        <text>tRNA(Ala) + L-alanine + ATP = L-alanyl-tRNA(Ala) + AMP + diphosphate</text>
        <dbReference type="Rhea" id="RHEA:12540"/>
        <dbReference type="Rhea" id="RHEA-COMP:9657"/>
        <dbReference type="Rhea" id="RHEA-COMP:9923"/>
        <dbReference type="ChEBI" id="CHEBI:30616"/>
        <dbReference type="ChEBI" id="CHEBI:33019"/>
        <dbReference type="ChEBI" id="CHEBI:57972"/>
        <dbReference type="ChEBI" id="CHEBI:78442"/>
        <dbReference type="ChEBI" id="CHEBI:78497"/>
        <dbReference type="ChEBI" id="CHEBI:456215"/>
        <dbReference type="EC" id="6.1.1.7"/>
    </reaction>
</comment>
<comment type="cofactor">
    <cofactor evidence="1">
        <name>Zn(2+)</name>
        <dbReference type="ChEBI" id="CHEBI:29105"/>
    </cofactor>
    <text evidence="1">Binds 1 zinc ion per subunit.</text>
</comment>
<comment type="subcellular location">
    <subcellularLocation>
        <location evidence="1">Cytoplasm</location>
    </subcellularLocation>
</comment>
<comment type="domain">
    <text evidence="1">Consists of three domains; the N-terminal catalytic domain, the editing domain and the C-terminal C-Ala domain. The editing domain removes incorrectly charged amino acids, while the C-Ala domain, along with tRNA(Ala), serves as a bridge to cooperatively bring together the editing and aminoacylation centers thus stimulating deacylation of misacylated tRNAs.</text>
</comment>
<comment type="similarity">
    <text evidence="1">Belongs to the class-II aminoacyl-tRNA synthetase family.</text>
</comment>
<reference key="1">
    <citation type="journal article" date="2014" name="Stand. Genomic Sci.">
        <title>Complete genome sequence of Anabaena variabilis ATCC 29413.</title>
        <authorList>
            <person name="Thiel T."/>
            <person name="Pratte B.S."/>
            <person name="Zhong J."/>
            <person name="Goodwin L."/>
            <person name="Copeland A."/>
            <person name="Lucas S."/>
            <person name="Han C."/>
            <person name="Pitluck S."/>
            <person name="Land M.L."/>
            <person name="Kyrpides N.C."/>
            <person name="Woyke T."/>
        </authorList>
    </citation>
    <scope>NUCLEOTIDE SEQUENCE [LARGE SCALE GENOMIC DNA]</scope>
    <source>
        <strain>ATCC 29413 / PCC 7937</strain>
    </source>
</reference>
<name>SYA_TRIV2</name>
<gene>
    <name evidence="1" type="primary">alaS</name>
    <name type="ordered locus">Ava_0226</name>
</gene>
<accession>Q3MGN4</accession>
<dbReference type="EC" id="6.1.1.7" evidence="1"/>
<dbReference type="EMBL" id="CP000117">
    <property type="protein sequence ID" value="ABA19852.1"/>
    <property type="molecule type" value="Genomic_DNA"/>
</dbReference>
<dbReference type="SMR" id="Q3MGN4"/>
<dbReference type="STRING" id="240292.Ava_0226"/>
<dbReference type="KEGG" id="ava:Ava_0226"/>
<dbReference type="eggNOG" id="COG0013">
    <property type="taxonomic scope" value="Bacteria"/>
</dbReference>
<dbReference type="HOGENOM" id="CLU_004485_1_1_3"/>
<dbReference type="Proteomes" id="UP000002533">
    <property type="component" value="Chromosome"/>
</dbReference>
<dbReference type="GO" id="GO:0005829">
    <property type="term" value="C:cytosol"/>
    <property type="evidence" value="ECO:0007669"/>
    <property type="project" value="TreeGrafter"/>
</dbReference>
<dbReference type="GO" id="GO:0004813">
    <property type="term" value="F:alanine-tRNA ligase activity"/>
    <property type="evidence" value="ECO:0007669"/>
    <property type="project" value="UniProtKB-UniRule"/>
</dbReference>
<dbReference type="GO" id="GO:0002161">
    <property type="term" value="F:aminoacyl-tRNA deacylase activity"/>
    <property type="evidence" value="ECO:0007669"/>
    <property type="project" value="TreeGrafter"/>
</dbReference>
<dbReference type="GO" id="GO:0005524">
    <property type="term" value="F:ATP binding"/>
    <property type="evidence" value="ECO:0007669"/>
    <property type="project" value="UniProtKB-UniRule"/>
</dbReference>
<dbReference type="GO" id="GO:0000049">
    <property type="term" value="F:tRNA binding"/>
    <property type="evidence" value="ECO:0007669"/>
    <property type="project" value="UniProtKB-KW"/>
</dbReference>
<dbReference type="GO" id="GO:0008270">
    <property type="term" value="F:zinc ion binding"/>
    <property type="evidence" value="ECO:0007669"/>
    <property type="project" value="UniProtKB-UniRule"/>
</dbReference>
<dbReference type="GO" id="GO:0006419">
    <property type="term" value="P:alanyl-tRNA aminoacylation"/>
    <property type="evidence" value="ECO:0007669"/>
    <property type="project" value="UniProtKB-UniRule"/>
</dbReference>
<dbReference type="CDD" id="cd00673">
    <property type="entry name" value="AlaRS_core"/>
    <property type="match status" value="1"/>
</dbReference>
<dbReference type="FunFam" id="2.40.30.130:FF:000001">
    <property type="entry name" value="Alanine--tRNA ligase"/>
    <property type="match status" value="1"/>
</dbReference>
<dbReference type="FunFam" id="3.10.310.40:FF:000001">
    <property type="entry name" value="Alanine--tRNA ligase"/>
    <property type="match status" value="1"/>
</dbReference>
<dbReference type="FunFam" id="3.30.54.20:FF:000001">
    <property type="entry name" value="Alanine--tRNA ligase"/>
    <property type="match status" value="1"/>
</dbReference>
<dbReference type="FunFam" id="3.30.930.10:FF:000004">
    <property type="entry name" value="Alanine--tRNA ligase"/>
    <property type="match status" value="1"/>
</dbReference>
<dbReference type="FunFam" id="3.30.980.10:FF:000004">
    <property type="entry name" value="Alanine--tRNA ligase, cytoplasmic"/>
    <property type="match status" value="1"/>
</dbReference>
<dbReference type="Gene3D" id="2.40.30.130">
    <property type="match status" value="1"/>
</dbReference>
<dbReference type="Gene3D" id="3.10.310.40">
    <property type="match status" value="1"/>
</dbReference>
<dbReference type="Gene3D" id="3.30.54.20">
    <property type="match status" value="1"/>
</dbReference>
<dbReference type="Gene3D" id="6.10.250.550">
    <property type="match status" value="1"/>
</dbReference>
<dbReference type="Gene3D" id="3.30.930.10">
    <property type="entry name" value="Bira Bifunctional Protein, Domain 2"/>
    <property type="match status" value="1"/>
</dbReference>
<dbReference type="Gene3D" id="3.30.980.10">
    <property type="entry name" value="Threonyl-trna Synthetase, Chain A, domain 2"/>
    <property type="match status" value="1"/>
</dbReference>
<dbReference type="HAMAP" id="MF_00036_B">
    <property type="entry name" value="Ala_tRNA_synth_B"/>
    <property type="match status" value="1"/>
</dbReference>
<dbReference type="InterPro" id="IPR045864">
    <property type="entry name" value="aa-tRNA-synth_II/BPL/LPL"/>
</dbReference>
<dbReference type="InterPro" id="IPR002318">
    <property type="entry name" value="Ala-tRNA-lgiase_IIc"/>
</dbReference>
<dbReference type="InterPro" id="IPR018162">
    <property type="entry name" value="Ala-tRNA-ligase_IIc_anticod-bd"/>
</dbReference>
<dbReference type="InterPro" id="IPR018165">
    <property type="entry name" value="Ala-tRNA-synth_IIc_core"/>
</dbReference>
<dbReference type="InterPro" id="IPR018164">
    <property type="entry name" value="Ala-tRNA-synth_IIc_N"/>
</dbReference>
<dbReference type="InterPro" id="IPR050058">
    <property type="entry name" value="Ala-tRNA_ligase"/>
</dbReference>
<dbReference type="InterPro" id="IPR023033">
    <property type="entry name" value="Ala_tRNA_ligase_euk/bac"/>
</dbReference>
<dbReference type="InterPro" id="IPR003156">
    <property type="entry name" value="DHHA1_dom"/>
</dbReference>
<dbReference type="InterPro" id="IPR018163">
    <property type="entry name" value="Thr/Ala-tRNA-synth_IIc_edit"/>
</dbReference>
<dbReference type="InterPro" id="IPR009000">
    <property type="entry name" value="Transl_B-barrel_sf"/>
</dbReference>
<dbReference type="InterPro" id="IPR012947">
    <property type="entry name" value="tRNA_SAD"/>
</dbReference>
<dbReference type="NCBIfam" id="TIGR00344">
    <property type="entry name" value="alaS"/>
    <property type="match status" value="1"/>
</dbReference>
<dbReference type="PANTHER" id="PTHR11777:SF9">
    <property type="entry name" value="ALANINE--TRNA LIGASE, CYTOPLASMIC"/>
    <property type="match status" value="1"/>
</dbReference>
<dbReference type="PANTHER" id="PTHR11777">
    <property type="entry name" value="ALANYL-TRNA SYNTHETASE"/>
    <property type="match status" value="1"/>
</dbReference>
<dbReference type="Pfam" id="PF02272">
    <property type="entry name" value="DHHA1"/>
    <property type="match status" value="1"/>
</dbReference>
<dbReference type="Pfam" id="PF01411">
    <property type="entry name" value="tRNA-synt_2c"/>
    <property type="match status" value="1"/>
</dbReference>
<dbReference type="Pfam" id="PF07973">
    <property type="entry name" value="tRNA_SAD"/>
    <property type="match status" value="1"/>
</dbReference>
<dbReference type="PRINTS" id="PR00980">
    <property type="entry name" value="TRNASYNTHALA"/>
</dbReference>
<dbReference type="SMART" id="SM00863">
    <property type="entry name" value="tRNA_SAD"/>
    <property type="match status" value="1"/>
</dbReference>
<dbReference type="SUPFAM" id="SSF55681">
    <property type="entry name" value="Class II aaRS and biotin synthetases"/>
    <property type="match status" value="1"/>
</dbReference>
<dbReference type="SUPFAM" id="SSF101353">
    <property type="entry name" value="Putative anticodon-binding domain of alanyl-tRNA synthetase (AlaRS)"/>
    <property type="match status" value="1"/>
</dbReference>
<dbReference type="SUPFAM" id="SSF55186">
    <property type="entry name" value="ThrRS/AlaRS common domain"/>
    <property type="match status" value="1"/>
</dbReference>
<dbReference type="SUPFAM" id="SSF50447">
    <property type="entry name" value="Translation proteins"/>
    <property type="match status" value="1"/>
</dbReference>
<dbReference type="PROSITE" id="PS50860">
    <property type="entry name" value="AA_TRNA_LIGASE_II_ALA"/>
    <property type="match status" value="1"/>
</dbReference>
<protein>
    <recommendedName>
        <fullName evidence="1">Alanine--tRNA ligase</fullName>
        <ecNumber evidence="1">6.1.1.7</ecNumber>
    </recommendedName>
    <alternativeName>
        <fullName evidence="1">Alanyl-tRNA synthetase</fullName>
        <shortName evidence="1">AlaRS</shortName>
    </alternativeName>
</protein>